<dbReference type="EMBL" id="CP001176">
    <property type="protein sequence ID" value="ACK63095.1"/>
    <property type="molecule type" value="Genomic_DNA"/>
</dbReference>
<dbReference type="SMR" id="B7HIJ2"/>
<dbReference type="KEGG" id="bcb:BCB4264_A0025"/>
<dbReference type="HOGENOM" id="CLU_140930_1_0_9"/>
<dbReference type="Proteomes" id="UP000007096">
    <property type="component" value="Chromosome"/>
</dbReference>
<dbReference type="GO" id="GO:0043590">
    <property type="term" value="C:bacterial nucleoid"/>
    <property type="evidence" value="ECO:0007669"/>
    <property type="project" value="UniProtKB-UniRule"/>
</dbReference>
<dbReference type="GO" id="GO:0005829">
    <property type="term" value="C:cytosol"/>
    <property type="evidence" value="ECO:0007669"/>
    <property type="project" value="TreeGrafter"/>
</dbReference>
<dbReference type="GO" id="GO:0003677">
    <property type="term" value="F:DNA binding"/>
    <property type="evidence" value="ECO:0007669"/>
    <property type="project" value="UniProtKB-UniRule"/>
</dbReference>
<dbReference type="FunFam" id="3.30.1310.10:FF:000002">
    <property type="entry name" value="Nucleoid-associated protein IKC_06587"/>
    <property type="match status" value="1"/>
</dbReference>
<dbReference type="Gene3D" id="3.30.1310.10">
    <property type="entry name" value="Nucleoid-associated protein YbaB-like domain"/>
    <property type="match status" value="1"/>
</dbReference>
<dbReference type="HAMAP" id="MF_00274">
    <property type="entry name" value="DNA_YbaB_EbfC"/>
    <property type="match status" value="1"/>
</dbReference>
<dbReference type="InterPro" id="IPR036894">
    <property type="entry name" value="YbaB-like_sf"/>
</dbReference>
<dbReference type="InterPro" id="IPR004401">
    <property type="entry name" value="YbaB/EbfC"/>
</dbReference>
<dbReference type="NCBIfam" id="TIGR00103">
    <property type="entry name" value="DNA_YbaB_EbfC"/>
    <property type="match status" value="1"/>
</dbReference>
<dbReference type="PANTHER" id="PTHR33449">
    <property type="entry name" value="NUCLEOID-ASSOCIATED PROTEIN YBAB"/>
    <property type="match status" value="1"/>
</dbReference>
<dbReference type="PANTHER" id="PTHR33449:SF1">
    <property type="entry name" value="NUCLEOID-ASSOCIATED PROTEIN YBAB"/>
    <property type="match status" value="1"/>
</dbReference>
<dbReference type="Pfam" id="PF02575">
    <property type="entry name" value="YbaB_DNA_bd"/>
    <property type="match status" value="1"/>
</dbReference>
<dbReference type="PIRSF" id="PIRSF004555">
    <property type="entry name" value="UCP004555"/>
    <property type="match status" value="1"/>
</dbReference>
<dbReference type="SUPFAM" id="SSF82607">
    <property type="entry name" value="YbaB-like"/>
    <property type="match status" value="1"/>
</dbReference>
<reference key="1">
    <citation type="submission" date="2008-10" db="EMBL/GenBank/DDBJ databases">
        <title>Genome sequence of Bacillus cereus B4264.</title>
        <authorList>
            <person name="Dodson R.J."/>
            <person name="Durkin A.S."/>
            <person name="Rosovitz M.J."/>
            <person name="Rasko D.A."/>
            <person name="Hoffmaster A."/>
            <person name="Ravel J."/>
            <person name="Sutton G."/>
        </authorList>
    </citation>
    <scope>NUCLEOTIDE SEQUENCE [LARGE SCALE GENOMIC DNA]</scope>
    <source>
        <strain>B4264</strain>
    </source>
</reference>
<sequence length="109" mass="11863">MMRGGMGNMNNMMKQMQKMQKDMAKAQEELGEKTVEGTAGGGMITVIANGHKQILEVKIKEEVVDPEDIEMLQDLVLAATNDALKKADELSNSTMGKFTKGLNLPGGMF</sequence>
<keyword id="KW-0963">Cytoplasm</keyword>
<keyword id="KW-0238">DNA-binding</keyword>
<accession>B7HIJ2</accession>
<evidence type="ECO:0000255" key="1">
    <source>
        <dbReference type="HAMAP-Rule" id="MF_00274"/>
    </source>
</evidence>
<protein>
    <recommendedName>
        <fullName evidence="1">Nucleoid-associated protein BCB4264_A0025</fullName>
    </recommendedName>
</protein>
<comment type="function">
    <text evidence="1">Binds to DNA and alters its conformation. May be involved in regulation of gene expression, nucleoid organization and DNA protection.</text>
</comment>
<comment type="subunit">
    <text evidence="1">Homodimer.</text>
</comment>
<comment type="subcellular location">
    <subcellularLocation>
        <location evidence="1">Cytoplasm</location>
        <location evidence="1">Nucleoid</location>
    </subcellularLocation>
</comment>
<comment type="similarity">
    <text evidence="1">Belongs to the YbaB/EbfC family.</text>
</comment>
<gene>
    <name type="ordered locus">BCB4264_A0025</name>
</gene>
<feature type="chain" id="PRO_1000119311" description="Nucleoid-associated protein BCB4264_A0025">
    <location>
        <begin position="1"/>
        <end position="109"/>
    </location>
</feature>
<proteinExistence type="inferred from homology"/>
<organism>
    <name type="scientific">Bacillus cereus (strain B4264)</name>
    <dbReference type="NCBI Taxonomy" id="405532"/>
    <lineage>
        <taxon>Bacteria</taxon>
        <taxon>Bacillati</taxon>
        <taxon>Bacillota</taxon>
        <taxon>Bacilli</taxon>
        <taxon>Bacillales</taxon>
        <taxon>Bacillaceae</taxon>
        <taxon>Bacillus</taxon>
        <taxon>Bacillus cereus group</taxon>
    </lineage>
</organism>
<name>Y025_BACC4</name>